<sequence>ALWKSLLKGAGQLVGGVVQHFMGSQGQPES</sequence>
<feature type="peptide" id="PRO_0000404619" description="Dermaseptin-J10" evidence="3">
    <location>
        <begin position="1"/>
        <end position="30"/>
    </location>
</feature>
<feature type="unsure residue" description="L or I" evidence="3">
    <location>
        <position position="2"/>
    </location>
</feature>
<feature type="unsure residue" description="K or Q" evidence="3">
    <location>
        <position position="4"/>
    </location>
</feature>
<feature type="unsure residue" description="L or I" evidence="3">
    <location>
        <position position="6"/>
    </location>
</feature>
<feature type="unsure residue" description="L or I" evidence="3">
    <location>
        <position position="7"/>
    </location>
</feature>
<feature type="unsure residue" description="K or Q" evidence="3">
    <location>
        <position position="8"/>
    </location>
</feature>
<feature type="unsure residue" description="Q or K" evidence="3">
    <location>
        <position position="12"/>
    </location>
</feature>
<feature type="unsure residue" description="L or I" evidence="3">
    <location>
        <position position="13"/>
    </location>
</feature>
<feature type="unsure residue" description="Q or K" evidence="3">
    <location>
        <position position="19"/>
    </location>
</feature>
<feature type="unsure residue" description="Q or K" evidence="3">
    <location>
        <position position="25"/>
    </location>
</feature>
<feature type="unsure residue" description="Q or K" evidence="3">
    <location>
        <position position="27"/>
    </location>
</feature>
<reference evidence="5" key="1">
    <citation type="journal article" date="2011" name="Toxicon">
        <title>Peptidomic dissection of the skin secretion of Phasmahyla jandaia (Bokermann and Sazima, 1978) (Anura, Hylidae, Phyllomedusinae).</title>
        <authorList>
            <person name="Rates B."/>
            <person name="Silva L.P."/>
            <person name="Ireno I.C."/>
            <person name="Leite F.S."/>
            <person name="Borges M.H."/>
            <person name="Bloch C. Jr."/>
            <person name="De Lima M.E."/>
            <person name="Pimenta A.M."/>
        </authorList>
    </citation>
    <scope>PROTEIN SEQUENCE</scope>
    <scope>SUBCELLULAR LOCATION</scope>
    <scope>TISSUE SPECIFICITY</scope>
    <scope>MASS SPECTROMETRY</scope>
    <source>
        <tissue evidence="3">Skin secretion</tissue>
    </source>
</reference>
<name>DMS10_PHAJA</name>
<proteinExistence type="evidence at protein level"/>
<comment type="function">
    <text evidence="1">Has antimicrobial activity.</text>
</comment>
<comment type="subcellular location">
    <subcellularLocation>
        <location evidence="3">Secreted</location>
    </subcellularLocation>
</comment>
<comment type="tissue specificity">
    <text evidence="3">Expressed by the skin glands.</text>
</comment>
<comment type="mass spectrometry"/>
<comment type="similarity">
    <text evidence="2">Belongs to the frog skin active peptide (FSAP) family. Dermaseptin subfamily.</text>
</comment>
<dbReference type="SMR" id="P86642"/>
<dbReference type="GO" id="GO:0005576">
    <property type="term" value="C:extracellular region"/>
    <property type="evidence" value="ECO:0007669"/>
    <property type="project" value="UniProtKB-SubCell"/>
</dbReference>
<dbReference type="GO" id="GO:0042742">
    <property type="term" value="P:defense response to bacterium"/>
    <property type="evidence" value="ECO:0007669"/>
    <property type="project" value="UniProtKB-KW"/>
</dbReference>
<keyword id="KW-0878">Amphibian defense peptide</keyword>
<keyword id="KW-0044">Antibiotic</keyword>
<keyword id="KW-0929">Antimicrobial</keyword>
<keyword id="KW-0903">Direct protein sequencing</keyword>
<keyword id="KW-0964">Secreted</keyword>
<protein>
    <recommendedName>
        <fullName evidence="4">Dermaseptin-J10</fullName>
        <shortName evidence="4">DRS-J10</shortName>
    </recommendedName>
</protein>
<accession>P86642</accession>
<evidence type="ECO:0000250" key="1">
    <source>
        <dbReference type="UniProtKB" id="P84923"/>
    </source>
</evidence>
<evidence type="ECO:0000255" key="2"/>
<evidence type="ECO:0000269" key="3">
    <source>
    </source>
</evidence>
<evidence type="ECO:0000303" key="4">
    <source>
    </source>
</evidence>
<evidence type="ECO:0000305" key="5"/>
<organism>
    <name type="scientific">Phasmahyla jandaia</name>
    <name type="common">Jandaia leaf frog</name>
    <name type="synonym">Phyllomedusa jandaia</name>
    <dbReference type="NCBI Taxonomy" id="762504"/>
    <lineage>
        <taxon>Eukaryota</taxon>
        <taxon>Metazoa</taxon>
        <taxon>Chordata</taxon>
        <taxon>Craniata</taxon>
        <taxon>Vertebrata</taxon>
        <taxon>Euteleostomi</taxon>
        <taxon>Amphibia</taxon>
        <taxon>Batrachia</taxon>
        <taxon>Anura</taxon>
        <taxon>Neobatrachia</taxon>
        <taxon>Hyloidea</taxon>
        <taxon>Hylidae</taxon>
        <taxon>Phyllomedusinae</taxon>
        <taxon>Phasmahyla</taxon>
    </lineage>
</organism>